<keyword id="KW-0342">GTP-binding</keyword>
<keyword id="KW-0547">Nucleotide-binding</keyword>
<keyword id="KW-1185">Reference proteome</keyword>
<keyword id="KW-0677">Repeat</keyword>
<keyword id="KW-0690">Ribosome biogenesis</keyword>
<feature type="chain" id="PRO_1000099141" description="GTPase Der">
    <location>
        <begin position="1"/>
        <end position="459"/>
    </location>
</feature>
<feature type="domain" description="EngA-type G 1">
    <location>
        <begin position="3"/>
        <end position="169"/>
    </location>
</feature>
<feature type="domain" description="EngA-type G 2">
    <location>
        <begin position="183"/>
        <end position="358"/>
    </location>
</feature>
<feature type="domain" description="KH-like" evidence="1">
    <location>
        <begin position="359"/>
        <end position="442"/>
    </location>
</feature>
<feature type="binding site" evidence="1">
    <location>
        <begin position="9"/>
        <end position="16"/>
    </location>
    <ligand>
        <name>GTP</name>
        <dbReference type="ChEBI" id="CHEBI:37565"/>
        <label>1</label>
    </ligand>
</feature>
<feature type="binding site" evidence="1">
    <location>
        <begin position="56"/>
        <end position="60"/>
    </location>
    <ligand>
        <name>GTP</name>
        <dbReference type="ChEBI" id="CHEBI:37565"/>
        <label>1</label>
    </ligand>
</feature>
<feature type="binding site" evidence="1">
    <location>
        <begin position="119"/>
        <end position="122"/>
    </location>
    <ligand>
        <name>GTP</name>
        <dbReference type="ChEBI" id="CHEBI:37565"/>
        <label>1</label>
    </ligand>
</feature>
<feature type="binding site" evidence="1">
    <location>
        <begin position="189"/>
        <end position="196"/>
    </location>
    <ligand>
        <name>GTP</name>
        <dbReference type="ChEBI" id="CHEBI:37565"/>
        <label>2</label>
    </ligand>
</feature>
<feature type="binding site" evidence="1">
    <location>
        <begin position="236"/>
        <end position="240"/>
    </location>
    <ligand>
        <name>GTP</name>
        <dbReference type="ChEBI" id="CHEBI:37565"/>
        <label>2</label>
    </ligand>
</feature>
<feature type="binding site" evidence="1">
    <location>
        <begin position="301"/>
        <end position="304"/>
    </location>
    <ligand>
        <name>GTP</name>
        <dbReference type="ChEBI" id="CHEBI:37565"/>
        <label>2</label>
    </ligand>
</feature>
<name>DER_MYXXD</name>
<comment type="function">
    <text evidence="1">GTPase that plays an essential role in the late steps of ribosome biogenesis.</text>
</comment>
<comment type="subunit">
    <text evidence="1">Associates with the 50S ribosomal subunit.</text>
</comment>
<comment type="similarity">
    <text evidence="1">Belongs to the TRAFAC class TrmE-Era-EngA-EngB-Septin-like GTPase superfamily. EngA (Der) GTPase family.</text>
</comment>
<protein>
    <recommendedName>
        <fullName evidence="1">GTPase Der</fullName>
    </recommendedName>
    <alternativeName>
        <fullName evidence="1">GTP-binding protein EngA</fullName>
    </alternativeName>
</protein>
<proteinExistence type="inferred from homology"/>
<accession>Q1D5X5</accession>
<reference key="1">
    <citation type="journal article" date="2006" name="Proc. Natl. Acad. Sci. U.S.A.">
        <title>Evolution of sensory complexity recorded in a myxobacterial genome.</title>
        <authorList>
            <person name="Goldman B.S."/>
            <person name="Nierman W.C."/>
            <person name="Kaiser D."/>
            <person name="Slater S.C."/>
            <person name="Durkin A.S."/>
            <person name="Eisen J.A."/>
            <person name="Ronning C.M."/>
            <person name="Barbazuk W.B."/>
            <person name="Blanchard M."/>
            <person name="Field C."/>
            <person name="Halling C."/>
            <person name="Hinkle G."/>
            <person name="Iartchuk O."/>
            <person name="Kim H.S."/>
            <person name="Mackenzie C."/>
            <person name="Madupu R."/>
            <person name="Miller N."/>
            <person name="Shvartsbeyn A."/>
            <person name="Sullivan S.A."/>
            <person name="Vaudin M."/>
            <person name="Wiegand R."/>
            <person name="Kaplan H.B."/>
        </authorList>
    </citation>
    <scope>NUCLEOTIDE SEQUENCE [LARGE SCALE GENOMIC DNA]</scope>
    <source>
        <strain>DK1622</strain>
    </source>
</reference>
<gene>
    <name evidence="1" type="primary">der</name>
    <name type="synonym">engA</name>
    <name type="ordered locus">MXAN_3766</name>
</gene>
<organism>
    <name type="scientific">Myxococcus xanthus (strain DK1622)</name>
    <dbReference type="NCBI Taxonomy" id="246197"/>
    <lineage>
        <taxon>Bacteria</taxon>
        <taxon>Pseudomonadati</taxon>
        <taxon>Myxococcota</taxon>
        <taxon>Myxococcia</taxon>
        <taxon>Myxococcales</taxon>
        <taxon>Cystobacterineae</taxon>
        <taxon>Myxococcaceae</taxon>
        <taxon>Myxococcus</taxon>
    </lineage>
</organism>
<dbReference type="EMBL" id="CP000113">
    <property type="protein sequence ID" value="ABF88752.1"/>
    <property type="molecule type" value="Genomic_DNA"/>
</dbReference>
<dbReference type="RefSeq" id="WP_011553779.1">
    <property type="nucleotide sequence ID" value="NC_008095.1"/>
</dbReference>
<dbReference type="SMR" id="Q1D5X5"/>
<dbReference type="STRING" id="246197.MXAN_3766"/>
<dbReference type="EnsemblBacteria" id="ABF88752">
    <property type="protein sequence ID" value="ABF88752"/>
    <property type="gene ID" value="MXAN_3766"/>
</dbReference>
<dbReference type="GeneID" id="41361098"/>
<dbReference type="KEGG" id="mxa:MXAN_3766"/>
<dbReference type="eggNOG" id="COG1160">
    <property type="taxonomic scope" value="Bacteria"/>
</dbReference>
<dbReference type="HOGENOM" id="CLU_016077_6_2_7"/>
<dbReference type="OrthoDB" id="9805918at2"/>
<dbReference type="Proteomes" id="UP000002402">
    <property type="component" value="Chromosome"/>
</dbReference>
<dbReference type="GO" id="GO:0016887">
    <property type="term" value="F:ATP hydrolysis activity"/>
    <property type="evidence" value="ECO:0007669"/>
    <property type="project" value="InterPro"/>
</dbReference>
<dbReference type="GO" id="GO:0005525">
    <property type="term" value="F:GTP binding"/>
    <property type="evidence" value="ECO:0007669"/>
    <property type="project" value="UniProtKB-UniRule"/>
</dbReference>
<dbReference type="GO" id="GO:0043022">
    <property type="term" value="F:ribosome binding"/>
    <property type="evidence" value="ECO:0007669"/>
    <property type="project" value="TreeGrafter"/>
</dbReference>
<dbReference type="GO" id="GO:0042254">
    <property type="term" value="P:ribosome biogenesis"/>
    <property type="evidence" value="ECO:0007669"/>
    <property type="project" value="UniProtKB-KW"/>
</dbReference>
<dbReference type="CDD" id="cd01894">
    <property type="entry name" value="EngA1"/>
    <property type="match status" value="1"/>
</dbReference>
<dbReference type="CDD" id="cd01895">
    <property type="entry name" value="EngA2"/>
    <property type="match status" value="1"/>
</dbReference>
<dbReference type="FunFam" id="3.40.50.300:FF:000040">
    <property type="entry name" value="GTPase Der"/>
    <property type="match status" value="1"/>
</dbReference>
<dbReference type="FunFam" id="3.40.50.300:FF:000057">
    <property type="entry name" value="GTPase Der"/>
    <property type="match status" value="1"/>
</dbReference>
<dbReference type="Gene3D" id="3.30.300.20">
    <property type="match status" value="1"/>
</dbReference>
<dbReference type="Gene3D" id="3.40.50.300">
    <property type="entry name" value="P-loop containing nucleotide triphosphate hydrolases"/>
    <property type="match status" value="2"/>
</dbReference>
<dbReference type="HAMAP" id="MF_00195">
    <property type="entry name" value="GTPase_Der"/>
    <property type="match status" value="1"/>
</dbReference>
<dbReference type="InterPro" id="IPR003593">
    <property type="entry name" value="AAA+_ATPase"/>
</dbReference>
<dbReference type="InterPro" id="IPR031166">
    <property type="entry name" value="G_ENGA"/>
</dbReference>
<dbReference type="InterPro" id="IPR006073">
    <property type="entry name" value="GTP-bd"/>
</dbReference>
<dbReference type="InterPro" id="IPR016484">
    <property type="entry name" value="GTPase_Der"/>
</dbReference>
<dbReference type="InterPro" id="IPR032859">
    <property type="entry name" value="KH_dom-like"/>
</dbReference>
<dbReference type="InterPro" id="IPR015946">
    <property type="entry name" value="KH_dom-like_a/b"/>
</dbReference>
<dbReference type="InterPro" id="IPR027417">
    <property type="entry name" value="P-loop_NTPase"/>
</dbReference>
<dbReference type="InterPro" id="IPR005225">
    <property type="entry name" value="Small_GTP-bd"/>
</dbReference>
<dbReference type="NCBIfam" id="TIGR03594">
    <property type="entry name" value="GTPase_EngA"/>
    <property type="match status" value="1"/>
</dbReference>
<dbReference type="NCBIfam" id="TIGR00231">
    <property type="entry name" value="small_GTP"/>
    <property type="match status" value="2"/>
</dbReference>
<dbReference type="PANTHER" id="PTHR43834">
    <property type="entry name" value="GTPASE DER"/>
    <property type="match status" value="1"/>
</dbReference>
<dbReference type="PANTHER" id="PTHR43834:SF6">
    <property type="entry name" value="GTPASE DER"/>
    <property type="match status" value="1"/>
</dbReference>
<dbReference type="Pfam" id="PF14714">
    <property type="entry name" value="KH_dom-like"/>
    <property type="match status" value="1"/>
</dbReference>
<dbReference type="Pfam" id="PF01926">
    <property type="entry name" value="MMR_HSR1"/>
    <property type="match status" value="2"/>
</dbReference>
<dbReference type="PIRSF" id="PIRSF006485">
    <property type="entry name" value="GTP-binding_EngA"/>
    <property type="match status" value="1"/>
</dbReference>
<dbReference type="PRINTS" id="PR00326">
    <property type="entry name" value="GTP1OBG"/>
</dbReference>
<dbReference type="SMART" id="SM00382">
    <property type="entry name" value="AAA"/>
    <property type="match status" value="2"/>
</dbReference>
<dbReference type="SUPFAM" id="SSF52540">
    <property type="entry name" value="P-loop containing nucleoside triphosphate hydrolases"/>
    <property type="match status" value="2"/>
</dbReference>
<dbReference type="PROSITE" id="PS51712">
    <property type="entry name" value="G_ENGA"/>
    <property type="match status" value="2"/>
</dbReference>
<sequence>MKPLVAIVGRPNVGKSTLFNRLVGRRIALVQDEPGVTRDRHYADAEWEGRQFTFIDTGGFVPGDEDQLLQQVREQAQLAVDECDVIVFVTDARAGLTAADEAVANYLRKSGKPVVLAANKLDNTSGQMQALAGEFYRLGLGDVQALSAEHGLGMQELFDSVVARLPPKEEGEDAEAPPDDGIIRLAIIGRPNVGKSTLVNAILKEKRVVASDVAGTTRDPVDSELTYKDRKLLLTDTAGIRRKKSIAQRVEQFSVVAALKVMERSDVAVLLMDATEPAVDQDAKLAGLAEERGRALVIVVNKWDLVGADQRRQETYRESLKHSLKFVGYAPILFTSALTGSKVEKVVDVATELADQFRFRAPTPQLNRLLDHMVDNHPAPIVRGKPLRMYYIAQVAAAPPTFTITVNHPDGVPDMYKRYITNQLRKTFDLRVPIRLIFKGRPGQAKREARKRPQRQGKR</sequence>
<evidence type="ECO:0000255" key="1">
    <source>
        <dbReference type="HAMAP-Rule" id="MF_00195"/>
    </source>
</evidence>